<evidence type="ECO:0000255" key="1">
    <source>
        <dbReference type="HAMAP-Rule" id="MF_01007"/>
    </source>
</evidence>
<dbReference type="EC" id="2.1.1.199" evidence="1"/>
<dbReference type="EMBL" id="AM295007">
    <property type="protein sequence ID" value="CAM29765.1"/>
    <property type="molecule type" value="Genomic_DNA"/>
</dbReference>
<dbReference type="RefSeq" id="WP_002988893.1">
    <property type="nucleotide sequence ID" value="NC_009332.1"/>
</dbReference>
<dbReference type="SMR" id="A2RD40"/>
<dbReference type="KEGG" id="spf:SpyM50423"/>
<dbReference type="HOGENOM" id="CLU_038422_2_0_9"/>
<dbReference type="GO" id="GO:0005737">
    <property type="term" value="C:cytoplasm"/>
    <property type="evidence" value="ECO:0007669"/>
    <property type="project" value="UniProtKB-SubCell"/>
</dbReference>
<dbReference type="GO" id="GO:0071424">
    <property type="term" value="F:rRNA (cytosine-N4-)-methyltransferase activity"/>
    <property type="evidence" value="ECO:0007669"/>
    <property type="project" value="UniProtKB-UniRule"/>
</dbReference>
<dbReference type="GO" id="GO:0070475">
    <property type="term" value="P:rRNA base methylation"/>
    <property type="evidence" value="ECO:0007669"/>
    <property type="project" value="UniProtKB-UniRule"/>
</dbReference>
<dbReference type="FunFam" id="1.10.150.170:FF:000001">
    <property type="entry name" value="Ribosomal RNA small subunit methyltransferase H"/>
    <property type="match status" value="1"/>
</dbReference>
<dbReference type="Gene3D" id="1.10.150.170">
    <property type="entry name" value="Putative methyltransferase TM0872, insert domain"/>
    <property type="match status" value="1"/>
</dbReference>
<dbReference type="Gene3D" id="3.40.50.150">
    <property type="entry name" value="Vaccinia Virus protein VP39"/>
    <property type="match status" value="1"/>
</dbReference>
<dbReference type="HAMAP" id="MF_01007">
    <property type="entry name" value="16SrRNA_methyltr_H"/>
    <property type="match status" value="1"/>
</dbReference>
<dbReference type="InterPro" id="IPR002903">
    <property type="entry name" value="RsmH"/>
</dbReference>
<dbReference type="InterPro" id="IPR023397">
    <property type="entry name" value="SAM-dep_MeTrfase_MraW_recog"/>
</dbReference>
<dbReference type="InterPro" id="IPR029063">
    <property type="entry name" value="SAM-dependent_MTases_sf"/>
</dbReference>
<dbReference type="NCBIfam" id="TIGR00006">
    <property type="entry name" value="16S rRNA (cytosine(1402)-N(4))-methyltransferase RsmH"/>
    <property type="match status" value="1"/>
</dbReference>
<dbReference type="PANTHER" id="PTHR11265:SF0">
    <property type="entry name" value="12S RRNA N4-METHYLCYTIDINE METHYLTRANSFERASE"/>
    <property type="match status" value="1"/>
</dbReference>
<dbReference type="PANTHER" id="PTHR11265">
    <property type="entry name" value="S-ADENOSYL-METHYLTRANSFERASE MRAW"/>
    <property type="match status" value="1"/>
</dbReference>
<dbReference type="Pfam" id="PF01795">
    <property type="entry name" value="Methyltransf_5"/>
    <property type="match status" value="1"/>
</dbReference>
<dbReference type="PIRSF" id="PIRSF004486">
    <property type="entry name" value="MraW"/>
    <property type="match status" value="1"/>
</dbReference>
<dbReference type="SUPFAM" id="SSF81799">
    <property type="entry name" value="Putative methyltransferase TM0872, insert domain"/>
    <property type="match status" value="1"/>
</dbReference>
<dbReference type="SUPFAM" id="SSF53335">
    <property type="entry name" value="S-adenosyl-L-methionine-dependent methyltransferases"/>
    <property type="match status" value="1"/>
</dbReference>
<proteinExistence type="inferred from homology"/>
<protein>
    <recommendedName>
        <fullName evidence="1">Ribosomal RNA small subunit methyltransferase H</fullName>
        <ecNumber evidence="1">2.1.1.199</ecNumber>
    </recommendedName>
    <alternativeName>
        <fullName evidence="1">16S rRNA m(4)C1402 methyltransferase</fullName>
    </alternativeName>
    <alternativeName>
        <fullName evidence="1">rRNA (cytosine-N(4)-)-methyltransferase RsmH</fullName>
    </alternativeName>
</protein>
<feature type="chain" id="PRO_0000387163" description="Ribosomal RNA small subunit methyltransferase H">
    <location>
        <begin position="1"/>
        <end position="316"/>
    </location>
</feature>
<feature type="binding site" evidence="1">
    <location>
        <begin position="35"/>
        <end position="37"/>
    </location>
    <ligand>
        <name>S-adenosyl-L-methionine</name>
        <dbReference type="ChEBI" id="CHEBI:59789"/>
    </ligand>
</feature>
<feature type="binding site" evidence="1">
    <location>
        <position position="55"/>
    </location>
    <ligand>
        <name>S-adenosyl-L-methionine</name>
        <dbReference type="ChEBI" id="CHEBI:59789"/>
    </ligand>
</feature>
<feature type="binding site" evidence="1">
    <location>
        <position position="84"/>
    </location>
    <ligand>
        <name>S-adenosyl-L-methionine</name>
        <dbReference type="ChEBI" id="CHEBI:59789"/>
    </ligand>
</feature>
<feature type="binding site" evidence="1">
    <location>
        <position position="105"/>
    </location>
    <ligand>
        <name>S-adenosyl-L-methionine</name>
        <dbReference type="ChEBI" id="CHEBI:59789"/>
    </ligand>
</feature>
<feature type="binding site" evidence="1">
    <location>
        <position position="112"/>
    </location>
    <ligand>
        <name>S-adenosyl-L-methionine</name>
        <dbReference type="ChEBI" id="CHEBI:59789"/>
    </ligand>
</feature>
<keyword id="KW-0963">Cytoplasm</keyword>
<keyword id="KW-0489">Methyltransferase</keyword>
<keyword id="KW-0698">rRNA processing</keyword>
<keyword id="KW-0949">S-adenosyl-L-methionine</keyword>
<keyword id="KW-0808">Transferase</keyword>
<sequence>MTKEFHHVTVLLHETVDMLDIKPDGIYVDATLGGSGHSAYLLSKLGEEGHLYCFDQDQKAIDNAQVTLKSYIDKGQVTFIKDNFRHLKARLTALGVDEIDGILYDLGVSSPQLDERERGFSYKQDAPLDMRMDRQSLLTAYEVVNTYPFNDLVKIFFKYGEDKFSKQIARKIEQARAIKPIETTTELAELIKAAKPAKELKKKGHPAKQIFQAIRIEVNDELGAADESIQDAMELLALDGRISVITFHSLEDRLTKQLFKEASTVDVPKGLPLIPEDMKPKFELVSRKPILPSHSELTANKRAHSAKLRVAKKIRK</sequence>
<gene>
    <name evidence="1" type="primary">rsmH</name>
    <name type="synonym">mraW</name>
    <name type="ordered locus">SpyM50423</name>
</gene>
<reference key="1">
    <citation type="journal article" date="2007" name="J. Bacteriol.">
        <title>Complete genome of acute rheumatic fever-associated serotype M5 Streptococcus pyogenes strain Manfredo.</title>
        <authorList>
            <person name="Holden M.T.G."/>
            <person name="Scott A."/>
            <person name="Cherevach I."/>
            <person name="Chillingworth T."/>
            <person name="Churcher C."/>
            <person name="Cronin A."/>
            <person name="Dowd L."/>
            <person name="Feltwell T."/>
            <person name="Hamlin N."/>
            <person name="Holroyd S."/>
            <person name="Jagels K."/>
            <person name="Moule S."/>
            <person name="Mungall K."/>
            <person name="Quail M.A."/>
            <person name="Price C."/>
            <person name="Rabbinowitsch E."/>
            <person name="Sharp S."/>
            <person name="Skelton J."/>
            <person name="Whitehead S."/>
            <person name="Barrell B.G."/>
            <person name="Kehoe M."/>
            <person name="Parkhill J."/>
        </authorList>
    </citation>
    <scope>NUCLEOTIDE SEQUENCE [LARGE SCALE GENOMIC DNA]</scope>
    <source>
        <strain>Manfredo</strain>
    </source>
</reference>
<organism>
    <name type="scientific">Streptococcus pyogenes serotype M5 (strain Manfredo)</name>
    <dbReference type="NCBI Taxonomy" id="160491"/>
    <lineage>
        <taxon>Bacteria</taxon>
        <taxon>Bacillati</taxon>
        <taxon>Bacillota</taxon>
        <taxon>Bacilli</taxon>
        <taxon>Lactobacillales</taxon>
        <taxon>Streptococcaceae</taxon>
        <taxon>Streptococcus</taxon>
    </lineage>
</organism>
<name>RSMH_STRPG</name>
<accession>A2RD40</accession>
<comment type="function">
    <text evidence="1">Specifically methylates the N4 position of cytidine in position 1402 (C1402) of 16S rRNA.</text>
</comment>
<comment type="catalytic activity">
    <reaction evidence="1">
        <text>cytidine(1402) in 16S rRNA + S-adenosyl-L-methionine = N(4)-methylcytidine(1402) in 16S rRNA + S-adenosyl-L-homocysteine + H(+)</text>
        <dbReference type="Rhea" id="RHEA:42928"/>
        <dbReference type="Rhea" id="RHEA-COMP:10286"/>
        <dbReference type="Rhea" id="RHEA-COMP:10287"/>
        <dbReference type="ChEBI" id="CHEBI:15378"/>
        <dbReference type="ChEBI" id="CHEBI:57856"/>
        <dbReference type="ChEBI" id="CHEBI:59789"/>
        <dbReference type="ChEBI" id="CHEBI:74506"/>
        <dbReference type="ChEBI" id="CHEBI:82748"/>
        <dbReference type="EC" id="2.1.1.199"/>
    </reaction>
</comment>
<comment type="subcellular location">
    <subcellularLocation>
        <location evidence="1">Cytoplasm</location>
    </subcellularLocation>
</comment>
<comment type="similarity">
    <text evidence="1">Belongs to the methyltransferase superfamily. RsmH family.</text>
</comment>